<keyword id="KW-0012">Acyltransferase</keyword>
<keyword id="KW-0046">Antibiotic resistance</keyword>
<keyword id="KW-0614">Plasmid</keyword>
<keyword id="KW-0808">Transferase</keyword>
<reference key="1">
    <citation type="journal article" date="1990" name="Gene">
        <title>Chloramphenicol resistance in Campylobacter coli: nucleotide sequence, expression, and cloning vector construction.</title>
        <authorList>
            <person name="Wang Y."/>
            <person name="Taylor D.E."/>
        </authorList>
    </citation>
    <scope>NUCLEOTIDE SEQUENCE [GENOMIC DNA]</scope>
</reference>
<evidence type="ECO:0000255" key="1">
    <source>
        <dbReference type="PROSITE-ProRule" id="PRU10021"/>
    </source>
</evidence>
<evidence type="ECO:0000305" key="2"/>
<protein>
    <recommendedName>
        <fullName>Chloramphenicol acetyltransferase</fullName>
        <shortName>CAT</shortName>
        <ecNumber>2.3.1.28</ecNumber>
    </recommendedName>
</protein>
<dbReference type="EC" id="2.3.1.28"/>
<dbReference type="EMBL" id="M35190">
    <property type="protein sequence ID" value="AAA23018.1"/>
    <property type="molecule type" value="Genomic_DNA"/>
</dbReference>
<dbReference type="PIR" id="JQ0788">
    <property type="entry name" value="JQ0788"/>
</dbReference>
<dbReference type="RefSeq" id="WP_040564913.1">
    <property type="nucleotide sequence ID" value="NZ_OY754852.1"/>
</dbReference>
<dbReference type="SMR" id="P22782"/>
<dbReference type="CARD" id="ARO:3004454">
    <property type="molecule name" value="Ccol_ACT_CHL"/>
    <property type="mechanism identifier" value="ARO:0001004"/>
    <property type="mechanism name" value="antibiotic inactivation"/>
</dbReference>
<dbReference type="KEGG" id="ag:AAA23018"/>
<dbReference type="PATRIC" id="fig|195.1009.peg.614"/>
<dbReference type="GO" id="GO:0008811">
    <property type="term" value="F:chloramphenicol O-acetyltransferase activity"/>
    <property type="evidence" value="ECO:0007669"/>
    <property type="project" value="UniProtKB-EC"/>
</dbReference>
<dbReference type="GO" id="GO:0046677">
    <property type="term" value="P:response to antibiotic"/>
    <property type="evidence" value="ECO:0007669"/>
    <property type="project" value="UniProtKB-KW"/>
</dbReference>
<dbReference type="Gene3D" id="3.30.559.10">
    <property type="entry name" value="Chloramphenicol acetyltransferase-like domain"/>
    <property type="match status" value="1"/>
</dbReference>
<dbReference type="InterPro" id="IPR023213">
    <property type="entry name" value="CAT-like_dom_sf"/>
</dbReference>
<dbReference type="InterPro" id="IPR018372">
    <property type="entry name" value="Chloramphenicol_AcTrfase_AS"/>
</dbReference>
<dbReference type="InterPro" id="IPR001707">
    <property type="entry name" value="Cmp_AcTrfase"/>
</dbReference>
<dbReference type="NCBIfam" id="NF000491">
    <property type="entry name" value="chloram_CatA"/>
    <property type="match status" value="1"/>
</dbReference>
<dbReference type="PANTHER" id="PTHR38474:SF2">
    <property type="entry name" value="CHLORAMPHENICOL ACETYLTRANSFERASE"/>
    <property type="match status" value="1"/>
</dbReference>
<dbReference type="PANTHER" id="PTHR38474">
    <property type="entry name" value="SLR0299 PROTEIN"/>
    <property type="match status" value="1"/>
</dbReference>
<dbReference type="Pfam" id="PF00302">
    <property type="entry name" value="CAT"/>
    <property type="match status" value="1"/>
</dbReference>
<dbReference type="PIRSF" id="PIRSF000440">
    <property type="entry name" value="CAT"/>
    <property type="match status" value="1"/>
</dbReference>
<dbReference type="SMART" id="SM01059">
    <property type="entry name" value="CAT"/>
    <property type="match status" value="1"/>
</dbReference>
<dbReference type="SUPFAM" id="SSF52777">
    <property type="entry name" value="CoA-dependent acyltransferases"/>
    <property type="match status" value="1"/>
</dbReference>
<dbReference type="PROSITE" id="PS00100">
    <property type="entry name" value="CAT"/>
    <property type="match status" value="1"/>
</dbReference>
<proteinExistence type="inferred from homology"/>
<accession>P22782</accession>
<comment type="function">
    <text>This enzyme is an effector of chloramphenicol resistance in bacteria.</text>
</comment>
<comment type="catalytic activity">
    <reaction evidence="1">
        <text>chloramphenicol + acetyl-CoA = chloramphenicol 3-acetate + CoA</text>
        <dbReference type="Rhea" id="RHEA:18421"/>
        <dbReference type="ChEBI" id="CHEBI:16730"/>
        <dbReference type="ChEBI" id="CHEBI:17698"/>
        <dbReference type="ChEBI" id="CHEBI:57287"/>
        <dbReference type="ChEBI" id="CHEBI:57288"/>
        <dbReference type="EC" id="2.3.1.28"/>
    </reaction>
</comment>
<comment type="subunit">
    <text>Homotrimer.</text>
</comment>
<comment type="similarity">
    <text evidence="2">Belongs to the chloramphenicol acetyltransferase family.</text>
</comment>
<geneLocation type="plasmid">
    <name>pNR9589</name>
</geneLocation>
<organism>
    <name type="scientific">Campylobacter coli</name>
    <dbReference type="NCBI Taxonomy" id="195"/>
    <lineage>
        <taxon>Bacteria</taxon>
        <taxon>Pseudomonadati</taxon>
        <taxon>Campylobacterota</taxon>
        <taxon>Epsilonproteobacteria</taxon>
        <taxon>Campylobacterales</taxon>
        <taxon>Campylobacteraceae</taxon>
        <taxon>Campylobacter</taxon>
    </lineage>
</organism>
<sequence length="207" mass="24292">MQFTKIDINNWTRKEYFDHYFGNTPCTYSMTVKLDISKLKKDGKKLYPTLLYGVTTIINRHEEFRTALDENGQVGVFSEMLPCYTVFHKETETFSSIWTEFTADYTEFLQNYQKDIDAFGERMGMSAKPNPPENTFPVSMIPWTSFEGFNLNLKKGYDYLLPIFTFGKYYEEGGKYYIPLSIQVHHAVCDGFHVCRFLDELQDLLNK</sequence>
<name>CAT_CAMCO</name>
<feature type="chain" id="PRO_0000165858" description="Chloramphenicol acetyltransferase">
    <location>
        <begin position="1"/>
        <end position="207"/>
    </location>
</feature>
<feature type="active site" description="Proton acceptor" evidence="1">
    <location>
        <position position="186"/>
    </location>
</feature>